<proteinExistence type="evidence at protein level"/>
<gene>
    <name type="primary">ZNF641</name>
</gene>
<keyword id="KW-0025">Alternative splicing</keyword>
<keyword id="KW-0238">DNA-binding</keyword>
<keyword id="KW-0479">Metal-binding</keyword>
<keyword id="KW-0539">Nucleus</keyword>
<keyword id="KW-0597">Phosphoprotein</keyword>
<keyword id="KW-1267">Proteomics identification</keyword>
<keyword id="KW-1185">Reference proteome</keyword>
<keyword id="KW-0677">Repeat</keyword>
<keyword id="KW-0804">Transcription</keyword>
<keyword id="KW-0805">Transcription regulation</keyword>
<keyword id="KW-0862">Zinc</keyword>
<keyword id="KW-0863">Zinc-finger</keyword>
<name>ZN641_HUMAN</name>
<evidence type="ECO:0000255" key="1">
    <source>
        <dbReference type="PROSITE-ProRule" id="PRU00042"/>
    </source>
</evidence>
<evidence type="ECO:0000255" key="2">
    <source>
        <dbReference type="PROSITE-ProRule" id="PRU00119"/>
    </source>
</evidence>
<evidence type="ECO:0000256" key="3">
    <source>
        <dbReference type="SAM" id="MobiDB-lite"/>
    </source>
</evidence>
<evidence type="ECO:0000269" key="4">
    <source>
    </source>
</evidence>
<evidence type="ECO:0000269" key="5">
    <source>
    </source>
</evidence>
<evidence type="ECO:0000269" key="6">
    <source>
    </source>
</evidence>
<evidence type="ECO:0000303" key="7">
    <source>
    </source>
</evidence>
<evidence type="ECO:0000303" key="8">
    <source>
    </source>
</evidence>
<evidence type="ECO:0000305" key="9"/>
<evidence type="ECO:0007744" key="10">
    <source>
    </source>
</evidence>
<evidence type="ECO:0007744" key="11">
    <source>
    </source>
</evidence>
<reference key="1">
    <citation type="journal article" date="2006" name="Biochem. Biophys. Res. Commun.">
        <title>Activation of transcriptional activities of AP-1 and SRE by a new zinc-finger protein ZNF641.</title>
        <authorList>
            <person name="Qi X."/>
            <person name="Li Y."/>
            <person name="Xiao J."/>
            <person name="Yuan W."/>
            <person name="Yan Y."/>
            <person name="Wang Y."/>
            <person name="Liang S."/>
            <person name="Zhu C."/>
            <person name="Chen Y."/>
            <person name="Liu M."/>
            <person name="Wu X."/>
        </authorList>
    </citation>
    <scope>NUCLEOTIDE SEQUENCE [MRNA] (ISOFORM 1)</scope>
    <scope>FUNCTION</scope>
    <scope>SUBCELLULAR LOCATION</scope>
    <scope>TISSUE SPECIFICITY</scope>
    <source>
        <tissue>Fetal heart</tissue>
    </source>
</reference>
<reference key="2">
    <citation type="journal article" date="2004" name="Nat. Genet.">
        <title>Complete sequencing and characterization of 21,243 full-length human cDNAs.</title>
        <authorList>
            <person name="Ota T."/>
            <person name="Suzuki Y."/>
            <person name="Nishikawa T."/>
            <person name="Otsuki T."/>
            <person name="Sugiyama T."/>
            <person name="Irie R."/>
            <person name="Wakamatsu A."/>
            <person name="Hayashi K."/>
            <person name="Sato H."/>
            <person name="Nagai K."/>
            <person name="Kimura K."/>
            <person name="Makita H."/>
            <person name="Sekine M."/>
            <person name="Obayashi M."/>
            <person name="Nishi T."/>
            <person name="Shibahara T."/>
            <person name="Tanaka T."/>
            <person name="Ishii S."/>
            <person name="Yamamoto J."/>
            <person name="Saito K."/>
            <person name="Kawai Y."/>
            <person name="Isono Y."/>
            <person name="Nakamura Y."/>
            <person name="Nagahari K."/>
            <person name="Murakami K."/>
            <person name="Yasuda T."/>
            <person name="Iwayanagi T."/>
            <person name="Wagatsuma M."/>
            <person name="Shiratori A."/>
            <person name="Sudo H."/>
            <person name="Hosoiri T."/>
            <person name="Kaku Y."/>
            <person name="Kodaira H."/>
            <person name="Kondo H."/>
            <person name="Sugawara M."/>
            <person name="Takahashi M."/>
            <person name="Kanda K."/>
            <person name="Yokoi T."/>
            <person name="Furuya T."/>
            <person name="Kikkawa E."/>
            <person name="Omura Y."/>
            <person name="Abe K."/>
            <person name="Kamihara K."/>
            <person name="Katsuta N."/>
            <person name="Sato K."/>
            <person name="Tanikawa M."/>
            <person name="Yamazaki M."/>
            <person name="Ninomiya K."/>
            <person name="Ishibashi T."/>
            <person name="Yamashita H."/>
            <person name="Murakawa K."/>
            <person name="Fujimori K."/>
            <person name="Tanai H."/>
            <person name="Kimata M."/>
            <person name="Watanabe M."/>
            <person name="Hiraoka S."/>
            <person name="Chiba Y."/>
            <person name="Ishida S."/>
            <person name="Ono Y."/>
            <person name="Takiguchi S."/>
            <person name="Watanabe S."/>
            <person name="Yosida M."/>
            <person name="Hotuta T."/>
            <person name="Kusano J."/>
            <person name="Kanehori K."/>
            <person name="Takahashi-Fujii A."/>
            <person name="Hara H."/>
            <person name="Tanase T.-O."/>
            <person name="Nomura Y."/>
            <person name="Togiya S."/>
            <person name="Komai F."/>
            <person name="Hara R."/>
            <person name="Takeuchi K."/>
            <person name="Arita M."/>
            <person name="Imose N."/>
            <person name="Musashino K."/>
            <person name="Yuuki H."/>
            <person name="Oshima A."/>
            <person name="Sasaki N."/>
            <person name="Aotsuka S."/>
            <person name="Yoshikawa Y."/>
            <person name="Matsunawa H."/>
            <person name="Ichihara T."/>
            <person name="Shiohata N."/>
            <person name="Sano S."/>
            <person name="Moriya S."/>
            <person name="Momiyama H."/>
            <person name="Satoh N."/>
            <person name="Takami S."/>
            <person name="Terashima Y."/>
            <person name="Suzuki O."/>
            <person name="Nakagawa S."/>
            <person name="Senoh A."/>
            <person name="Mizoguchi H."/>
            <person name="Goto Y."/>
            <person name="Shimizu F."/>
            <person name="Wakebe H."/>
            <person name="Hishigaki H."/>
            <person name="Watanabe T."/>
            <person name="Sugiyama A."/>
            <person name="Takemoto M."/>
            <person name="Kawakami B."/>
            <person name="Yamazaki M."/>
            <person name="Watanabe K."/>
            <person name="Kumagai A."/>
            <person name="Itakura S."/>
            <person name="Fukuzumi Y."/>
            <person name="Fujimori Y."/>
            <person name="Komiyama M."/>
            <person name="Tashiro H."/>
            <person name="Tanigami A."/>
            <person name="Fujiwara T."/>
            <person name="Ono T."/>
            <person name="Yamada K."/>
            <person name="Fujii Y."/>
            <person name="Ozaki K."/>
            <person name="Hirao M."/>
            <person name="Ohmori Y."/>
            <person name="Kawabata A."/>
            <person name="Hikiji T."/>
            <person name="Kobatake N."/>
            <person name="Inagaki H."/>
            <person name="Ikema Y."/>
            <person name="Okamoto S."/>
            <person name="Okitani R."/>
            <person name="Kawakami T."/>
            <person name="Noguchi S."/>
            <person name="Itoh T."/>
            <person name="Shigeta K."/>
            <person name="Senba T."/>
            <person name="Matsumura K."/>
            <person name="Nakajima Y."/>
            <person name="Mizuno T."/>
            <person name="Morinaga M."/>
            <person name="Sasaki M."/>
            <person name="Togashi T."/>
            <person name="Oyama M."/>
            <person name="Hata H."/>
            <person name="Watanabe M."/>
            <person name="Komatsu T."/>
            <person name="Mizushima-Sugano J."/>
            <person name="Satoh T."/>
            <person name="Shirai Y."/>
            <person name="Takahashi Y."/>
            <person name="Nakagawa K."/>
            <person name="Okumura K."/>
            <person name="Nagase T."/>
            <person name="Nomura N."/>
            <person name="Kikuchi H."/>
            <person name="Masuho Y."/>
            <person name="Yamashita R."/>
            <person name="Nakai K."/>
            <person name="Yada T."/>
            <person name="Nakamura Y."/>
            <person name="Ohara O."/>
            <person name="Isogai T."/>
            <person name="Sugano S."/>
        </authorList>
    </citation>
    <scope>NUCLEOTIDE SEQUENCE [LARGE SCALE MRNA] (ISOFORMS 1; 3 AND 4)</scope>
    <source>
        <tissue>Kidney</tissue>
        <tissue>Lung</tissue>
        <tissue>Small intestine</tissue>
    </source>
</reference>
<reference key="3">
    <citation type="journal article" date="2006" name="Nature">
        <title>The finished DNA sequence of human chromosome 12.</title>
        <authorList>
            <person name="Scherer S.E."/>
            <person name="Muzny D.M."/>
            <person name="Buhay C.J."/>
            <person name="Chen R."/>
            <person name="Cree A."/>
            <person name="Ding Y."/>
            <person name="Dugan-Rocha S."/>
            <person name="Gill R."/>
            <person name="Gunaratne P."/>
            <person name="Harris R.A."/>
            <person name="Hawes A.C."/>
            <person name="Hernandez J."/>
            <person name="Hodgson A.V."/>
            <person name="Hume J."/>
            <person name="Jackson A."/>
            <person name="Khan Z.M."/>
            <person name="Kovar-Smith C."/>
            <person name="Lewis L.R."/>
            <person name="Lozado R.J."/>
            <person name="Metzker M.L."/>
            <person name="Milosavljevic A."/>
            <person name="Miner G.R."/>
            <person name="Montgomery K.T."/>
            <person name="Morgan M.B."/>
            <person name="Nazareth L.V."/>
            <person name="Scott G."/>
            <person name="Sodergren E."/>
            <person name="Song X.-Z."/>
            <person name="Steffen D."/>
            <person name="Lovering R.C."/>
            <person name="Wheeler D.A."/>
            <person name="Worley K.C."/>
            <person name="Yuan Y."/>
            <person name="Zhang Z."/>
            <person name="Adams C.Q."/>
            <person name="Ansari-Lari M.A."/>
            <person name="Ayele M."/>
            <person name="Brown M.J."/>
            <person name="Chen G."/>
            <person name="Chen Z."/>
            <person name="Clerc-Blankenburg K.P."/>
            <person name="Davis C."/>
            <person name="Delgado O."/>
            <person name="Dinh H.H."/>
            <person name="Draper H."/>
            <person name="Gonzalez-Garay M.L."/>
            <person name="Havlak P."/>
            <person name="Jackson L.R."/>
            <person name="Jacob L.S."/>
            <person name="Kelly S.H."/>
            <person name="Li L."/>
            <person name="Li Z."/>
            <person name="Liu J."/>
            <person name="Liu W."/>
            <person name="Lu J."/>
            <person name="Maheshwari M."/>
            <person name="Nguyen B.-V."/>
            <person name="Okwuonu G.O."/>
            <person name="Pasternak S."/>
            <person name="Perez L.M."/>
            <person name="Plopper F.J.H."/>
            <person name="Santibanez J."/>
            <person name="Shen H."/>
            <person name="Tabor P.E."/>
            <person name="Verduzco D."/>
            <person name="Waldron L."/>
            <person name="Wang Q."/>
            <person name="Williams G.A."/>
            <person name="Zhang J."/>
            <person name="Zhou J."/>
            <person name="Allen C.C."/>
            <person name="Amin A.G."/>
            <person name="Anyalebechi V."/>
            <person name="Bailey M."/>
            <person name="Barbaria J.A."/>
            <person name="Bimage K.E."/>
            <person name="Bryant N.P."/>
            <person name="Burch P.E."/>
            <person name="Burkett C.E."/>
            <person name="Burrell K.L."/>
            <person name="Calderon E."/>
            <person name="Cardenas V."/>
            <person name="Carter K."/>
            <person name="Casias K."/>
            <person name="Cavazos I."/>
            <person name="Cavazos S.R."/>
            <person name="Ceasar H."/>
            <person name="Chacko J."/>
            <person name="Chan S.N."/>
            <person name="Chavez D."/>
            <person name="Christopoulos C."/>
            <person name="Chu J."/>
            <person name="Cockrell R."/>
            <person name="Cox C.D."/>
            <person name="Dang M."/>
            <person name="Dathorne S.R."/>
            <person name="David R."/>
            <person name="Davis C.M."/>
            <person name="Davy-Carroll L."/>
            <person name="Deshazo D.R."/>
            <person name="Donlin J.E."/>
            <person name="D'Souza L."/>
            <person name="Eaves K.A."/>
            <person name="Egan A."/>
            <person name="Emery-Cohen A.J."/>
            <person name="Escotto M."/>
            <person name="Flagg N."/>
            <person name="Forbes L.D."/>
            <person name="Gabisi A.M."/>
            <person name="Garza M."/>
            <person name="Hamilton C."/>
            <person name="Henderson N."/>
            <person name="Hernandez O."/>
            <person name="Hines S."/>
            <person name="Hogues M.E."/>
            <person name="Huang M."/>
            <person name="Idlebird D.G."/>
            <person name="Johnson R."/>
            <person name="Jolivet A."/>
            <person name="Jones S."/>
            <person name="Kagan R."/>
            <person name="King L.M."/>
            <person name="Leal B."/>
            <person name="Lebow H."/>
            <person name="Lee S."/>
            <person name="LeVan J.M."/>
            <person name="Lewis L.C."/>
            <person name="London P."/>
            <person name="Lorensuhewa L.M."/>
            <person name="Loulseged H."/>
            <person name="Lovett D.A."/>
            <person name="Lucier A."/>
            <person name="Lucier R.L."/>
            <person name="Ma J."/>
            <person name="Madu R.C."/>
            <person name="Mapua P."/>
            <person name="Martindale A.D."/>
            <person name="Martinez E."/>
            <person name="Massey E."/>
            <person name="Mawhiney S."/>
            <person name="Meador M.G."/>
            <person name="Mendez S."/>
            <person name="Mercado C."/>
            <person name="Mercado I.C."/>
            <person name="Merritt C.E."/>
            <person name="Miner Z.L."/>
            <person name="Minja E."/>
            <person name="Mitchell T."/>
            <person name="Mohabbat F."/>
            <person name="Mohabbat K."/>
            <person name="Montgomery B."/>
            <person name="Moore N."/>
            <person name="Morris S."/>
            <person name="Munidasa M."/>
            <person name="Ngo R.N."/>
            <person name="Nguyen N.B."/>
            <person name="Nickerson E."/>
            <person name="Nwaokelemeh O.O."/>
            <person name="Nwokenkwo S."/>
            <person name="Obregon M."/>
            <person name="Oguh M."/>
            <person name="Oragunye N."/>
            <person name="Oviedo R.J."/>
            <person name="Parish B.J."/>
            <person name="Parker D.N."/>
            <person name="Parrish J."/>
            <person name="Parks K.L."/>
            <person name="Paul H.A."/>
            <person name="Payton B.A."/>
            <person name="Perez A."/>
            <person name="Perrin W."/>
            <person name="Pickens A."/>
            <person name="Primus E.L."/>
            <person name="Pu L.-L."/>
            <person name="Puazo M."/>
            <person name="Quiles M.M."/>
            <person name="Quiroz J.B."/>
            <person name="Rabata D."/>
            <person name="Reeves K."/>
            <person name="Ruiz S.J."/>
            <person name="Shao H."/>
            <person name="Sisson I."/>
            <person name="Sonaike T."/>
            <person name="Sorelle R.P."/>
            <person name="Sutton A.E."/>
            <person name="Svatek A.F."/>
            <person name="Svetz L.A."/>
            <person name="Tamerisa K.S."/>
            <person name="Taylor T.R."/>
            <person name="Teague B."/>
            <person name="Thomas N."/>
            <person name="Thorn R.D."/>
            <person name="Trejos Z.Y."/>
            <person name="Trevino B.K."/>
            <person name="Ukegbu O.N."/>
            <person name="Urban J.B."/>
            <person name="Vasquez L.I."/>
            <person name="Vera V.A."/>
            <person name="Villasana D.M."/>
            <person name="Wang L."/>
            <person name="Ward-Moore S."/>
            <person name="Warren J.T."/>
            <person name="Wei X."/>
            <person name="White F."/>
            <person name="Williamson A.L."/>
            <person name="Wleczyk R."/>
            <person name="Wooden H.S."/>
            <person name="Wooden S.H."/>
            <person name="Yen J."/>
            <person name="Yoon L."/>
            <person name="Yoon V."/>
            <person name="Zorrilla S.E."/>
            <person name="Nelson D."/>
            <person name="Kucherlapati R."/>
            <person name="Weinstock G."/>
            <person name="Gibbs R.A."/>
        </authorList>
    </citation>
    <scope>NUCLEOTIDE SEQUENCE [LARGE SCALE GENOMIC DNA]</scope>
</reference>
<reference key="4">
    <citation type="submission" date="2005-07" db="EMBL/GenBank/DDBJ databases">
        <authorList>
            <person name="Mural R.J."/>
            <person name="Istrail S."/>
            <person name="Sutton G."/>
            <person name="Florea L."/>
            <person name="Halpern A.L."/>
            <person name="Mobarry C.M."/>
            <person name="Lippert R."/>
            <person name="Walenz B."/>
            <person name="Shatkay H."/>
            <person name="Dew I."/>
            <person name="Miller J.R."/>
            <person name="Flanigan M.J."/>
            <person name="Edwards N.J."/>
            <person name="Bolanos R."/>
            <person name="Fasulo D."/>
            <person name="Halldorsson B.V."/>
            <person name="Hannenhalli S."/>
            <person name="Turner R."/>
            <person name="Yooseph S."/>
            <person name="Lu F."/>
            <person name="Nusskern D.R."/>
            <person name="Shue B.C."/>
            <person name="Zheng X.H."/>
            <person name="Zhong F."/>
            <person name="Delcher A.L."/>
            <person name="Huson D.H."/>
            <person name="Kravitz S.A."/>
            <person name="Mouchard L."/>
            <person name="Reinert K."/>
            <person name="Remington K.A."/>
            <person name="Clark A.G."/>
            <person name="Waterman M.S."/>
            <person name="Eichler E.E."/>
            <person name="Adams M.D."/>
            <person name="Hunkapiller M.W."/>
            <person name="Myers E.W."/>
            <person name="Venter J.C."/>
        </authorList>
    </citation>
    <scope>NUCLEOTIDE SEQUENCE [LARGE SCALE GENOMIC DNA]</scope>
</reference>
<reference key="5">
    <citation type="journal article" date="2004" name="Genome Res.">
        <title>The status, quality, and expansion of the NIH full-length cDNA project: the Mammalian Gene Collection (MGC).</title>
        <authorList>
            <consortium name="The MGC Project Team"/>
        </authorList>
    </citation>
    <scope>NUCLEOTIDE SEQUENCE [LARGE SCALE MRNA] (ISOFORM 2)</scope>
    <scope>VARIANT CYS-231</scope>
    <source>
        <tissue>Brain</tissue>
    </source>
</reference>
<reference key="6">
    <citation type="journal article" date="2007" name="BMC Genomics">
        <title>The full-ORF clone resource of the German cDNA consortium.</title>
        <authorList>
            <person name="Bechtel S."/>
            <person name="Rosenfelder H."/>
            <person name="Duda A."/>
            <person name="Schmidt C.P."/>
            <person name="Ernst U."/>
            <person name="Wellenreuther R."/>
            <person name="Mehrle A."/>
            <person name="Schuster C."/>
            <person name="Bahr A."/>
            <person name="Bloecker H."/>
            <person name="Heubner D."/>
            <person name="Hoerlein A."/>
            <person name="Michel G."/>
            <person name="Wedler H."/>
            <person name="Koehrer K."/>
            <person name="Ottenwaelder B."/>
            <person name="Poustka A."/>
            <person name="Wiemann S."/>
            <person name="Schupp I."/>
        </authorList>
    </citation>
    <scope>NUCLEOTIDE SEQUENCE [LARGE SCALE MRNA] OF 286-438 (ISOFORM 1)</scope>
    <scope>VARIANT PRO-363</scope>
    <source>
        <tissue>Lymph node</tissue>
    </source>
</reference>
<reference key="7">
    <citation type="journal article" date="2010" name="Sci. Signal.">
        <title>Quantitative phosphoproteomics reveals widespread full phosphorylation site occupancy during mitosis.</title>
        <authorList>
            <person name="Olsen J.V."/>
            <person name="Vermeulen M."/>
            <person name="Santamaria A."/>
            <person name="Kumar C."/>
            <person name="Miller M.L."/>
            <person name="Jensen L.J."/>
            <person name="Gnad F."/>
            <person name="Cox J."/>
            <person name="Jensen T.S."/>
            <person name="Nigg E.A."/>
            <person name="Brunak S."/>
            <person name="Mann M."/>
        </authorList>
    </citation>
    <scope>PHOSPHORYLATION [LARGE SCALE ANALYSIS] AT SER-426</scope>
    <scope>IDENTIFICATION BY MASS SPECTROMETRY [LARGE SCALE ANALYSIS]</scope>
    <source>
        <tissue>Cervix carcinoma</tissue>
    </source>
</reference>
<reference key="8">
    <citation type="journal article" date="2013" name="J. Proteome Res.">
        <title>Toward a comprehensive characterization of a human cancer cell phosphoproteome.</title>
        <authorList>
            <person name="Zhou H."/>
            <person name="Di Palma S."/>
            <person name="Preisinger C."/>
            <person name="Peng M."/>
            <person name="Polat A.N."/>
            <person name="Heck A.J."/>
            <person name="Mohammed S."/>
        </authorList>
    </citation>
    <scope>PHOSPHORYLATION [LARGE SCALE ANALYSIS] AT SER-191 AND SER-426</scope>
    <scope>IDENTIFICATION BY MASS SPECTROMETRY [LARGE SCALE ANALYSIS]</scope>
    <source>
        <tissue>Cervix carcinoma</tissue>
        <tissue>Erythroleukemia</tissue>
    </source>
</reference>
<organism>
    <name type="scientific">Homo sapiens</name>
    <name type="common">Human</name>
    <dbReference type="NCBI Taxonomy" id="9606"/>
    <lineage>
        <taxon>Eukaryota</taxon>
        <taxon>Metazoa</taxon>
        <taxon>Chordata</taxon>
        <taxon>Craniata</taxon>
        <taxon>Vertebrata</taxon>
        <taxon>Euteleostomi</taxon>
        <taxon>Mammalia</taxon>
        <taxon>Eutheria</taxon>
        <taxon>Euarchontoglires</taxon>
        <taxon>Primates</taxon>
        <taxon>Haplorrhini</taxon>
        <taxon>Catarrhini</taxon>
        <taxon>Hominidae</taxon>
        <taxon>Homo</taxon>
    </lineage>
</organism>
<comment type="function">
    <text evidence="5">Transcriptional activator. Activates transcriptional activities of SRE and AP-1.</text>
</comment>
<comment type="interaction">
    <interactant intactId="EBI-12939666">
        <id>Q96N77-2</id>
    </interactant>
    <interactant intactId="EBI-355710">
        <id>P48643</id>
        <label>CCT5</label>
    </interactant>
    <organismsDiffer>false</organismsDiffer>
    <experiments>3</experiments>
</comment>
<comment type="interaction">
    <interactant intactId="EBI-12939666">
        <id>Q96N77-2</id>
    </interactant>
    <interactant intactId="EBI-10976677">
        <id>G5E9A7</id>
        <label>DMWD</label>
    </interactant>
    <organismsDiffer>false</organismsDiffer>
    <experiments>3</experiments>
</comment>
<comment type="interaction">
    <interactant intactId="EBI-12939666">
        <id>Q96N77-2</id>
    </interactant>
    <interactant intactId="EBI-747754">
        <id>P28799</id>
        <label>GRN</label>
    </interactant>
    <organismsDiffer>false</organismsDiffer>
    <experiments>3</experiments>
</comment>
<comment type="interaction">
    <interactant intactId="EBI-12939666">
        <id>Q96N77-2</id>
    </interactant>
    <interactant intactId="EBI-352682">
        <id>P04792</id>
        <label>HSPB1</label>
    </interactant>
    <organismsDiffer>false</organismsDiffer>
    <experiments>3</experiments>
</comment>
<comment type="interaction">
    <interactant intactId="EBI-12939666">
        <id>Q96N77-2</id>
    </interactant>
    <interactant intactId="EBI-466029">
        <id>P42858</id>
        <label>HTT</label>
    </interactant>
    <organismsDiffer>false</organismsDiffer>
    <experiments>18</experiments>
</comment>
<comment type="interaction">
    <interactant intactId="EBI-12939666">
        <id>Q96N77-2</id>
    </interactant>
    <interactant intactId="EBI-10975473">
        <id>O60333-2</id>
        <label>KIF1B</label>
    </interactant>
    <organismsDiffer>false</organismsDiffer>
    <experiments>3</experiments>
</comment>
<comment type="interaction">
    <interactant intactId="EBI-12939666">
        <id>Q96N77-2</id>
    </interactant>
    <interactant intactId="EBI-8639312">
        <id>P25800</id>
        <label>LMO1</label>
    </interactant>
    <organismsDiffer>false</organismsDiffer>
    <experiments>3</experiments>
</comment>
<comment type="interaction">
    <interactant intactId="EBI-12939666">
        <id>Q96N77-2</id>
    </interactant>
    <interactant intactId="EBI-11959475">
        <id>P25791-3</id>
        <label>LMO2</label>
    </interactant>
    <organismsDiffer>false</organismsDiffer>
    <experiments>3</experiments>
</comment>
<comment type="interaction">
    <interactant intactId="EBI-12939666">
        <id>Q96N77-2</id>
    </interactant>
    <interactant intactId="EBI-11742507">
        <id>Q8TAP4-4</id>
        <label>LMO3</label>
    </interactant>
    <organismsDiffer>false</organismsDiffer>
    <experiments>3</experiments>
</comment>
<comment type="interaction">
    <interactant intactId="EBI-12939666">
        <id>Q96N77-2</id>
    </interactant>
    <interactant intactId="EBI-475646">
        <id>P07196</id>
        <label>NEFL</label>
    </interactant>
    <organismsDiffer>false</organismsDiffer>
    <experiments>3</experiments>
</comment>
<comment type="interaction">
    <interactant intactId="EBI-12939666">
        <id>Q96N77-2</id>
    </interactant>
    <interactant intactId="EBI-396669">
        <id>Q9Y3C5</id>
        <label>RNF11</label>
    </interactant>
    <organismsDiffer>false</organismsDiffer>
    <experiments>3</experiments>
</comment>
<comment type="interaction">
    <interactant intactId="EBI-12939666">
        <id>Q96N77-2</id>
    </interactant>
    <interactant intactId="EBI-748391">
        <id>Q9BWG6</id>
        <label>SCNM1</label>
    </interactant>
    <organismsDiffer>false</organismsDiffer>
    <experiments>3</experiments>
</comment>
<comment type="interaction">
    <interactant intactId="EBI-12939666">
        <id>Q96N77-2</id>
    </interactant>
    <interactant intactId="EBI-5235340">
        <id>Q7Z699</id>
        <label>SPRED1</label>
    </interactant>
    <organismsDiffer>false</organismsDiffer>
    <experiments>3</experiments>
</comment>
<comment type="interaction">
    <interactant intactId="EBI-12939666">
        <id>Q96N77-2</id>
    </interactant>
    <interactant intactId="EBI-720609">
        <id>O76024</id>
        <label>WFS1</label>
    </interactant>
    <organismsDiffer>false</organismsDiffer>
    <experiments>3</experiments>
</comment>
<comment type="subcellular location">
    <subcellularLocation>
        <location evidence="5">Nucleus</location>
    </subcellularLocation>
</comment>
<comment type="alternative products">
    <event type="alternative splicing"/>
    <isoform>
        <id>Q96N77-1</id>
        <name>1</name>
        <sequence type="displayed"/>
    </isoform>
    <isoform>
        <id>Q96N77-2</id>
        <name>2</name>
        <sequence type="described" ref="VSP_024867 VSP_024868"/>
    </isoform>
    <isoform>
        <id>Q96N77-3</id>
        <name>3</name>
        <sequence type="described" ref="VSP_024867 VSP_043422"/>
    </isoform>
    <isoform>
        <id>Q96N77-4</id>
        <name>4</name>
        <sequence type="described" ref="VSP_024867"/>
    </isoform>
</comment>
<comment type="tissue specificity">
    <text evidence="5">Highly expressed in skeletal muscle, moderate expression in heart, liver, and pancreas, lower expression in placenta, no expression seen in brain, lung, and kidney.</text>
</comment>
<comment type="similarity">
    <text evidence="9">Belongs to the krueppel C2H2-type zinc-finger protein family.</text>
</comment>
<accession>Q96N77</accession>
<accession>B3KS43</accession>
<accession>B4DNU5</accession>
<accession>Q8TCQ7</accession>
<accession>Q8WVE1</accession>
<sequence length="438" mass="49528">MQAEDRSQFGSAAEMLSEQTAALGTGWESMNVQLDGAEPQVERGSQEERPWRTVPGPLEHLCCDLEEEPQSLQEKAQSAPWVPAIPQEGNTGDWEMAAALLAAGSQGLVTIKDVSLCFSQEEWRSLDPSQTDFYGEYVMQENCGIVVSLRFPIPKLDMLSQLEGGEEQWVPDPQDLEERDILRVTYTGDGSEHEGDTPELEAEPPRMLSSVSEDTVLWNPEHDESWDSMPSSSRGMLLGPPFLQEDSFSNLLCSTEMDSLLRPHTCPQCGKQFVWGSHLARHQQTHTGERPYSCLKCEKTFGRRHHLIRHQKTHLHDKTSRCSECGKNFRCNSHLASHQRVHAEGKSCKGQEVGESPGTRKRQRAPPVPKCHVCTECGKSFGRRHHLVRHWLTHTGEKPFQCPRCEKSFGRKHHLDRHLLTHQGQSPRNSWDRGTSVF</sequence>
<protein>
    <recommendedName>
        <fullName>Zinc finger protein 641</fullName>
    </recommendedName>
</protein>
<dbReference type="EMBL" id="AY842285">
    <property type="protein sequence ID" value="AAW28082.1"/>
    <property type="molecule type" value="mRNA"/>
</dbReference>
<dbReference type="EMBL" id="AK055857">
    <property type="protein sequence ID" value="BAB71031.1"/>
    <property type="molecule type" value="mRNA"/>
</dbReference>
<dbReference type="EMBL" id="AK092740">
    <property type="protein sequence ID" value="BAG52605.1"/>
    <property type="molecule type" value="mRNA"/>
</dbReference>
<dbReference type="EMBL" id="AK298064">
    <property type="protein sequence ID" value="BAG60357.1"/>
    <property type="molecule type" value="mRNA"/>
</dbReference>
<dbReference type="EMBL" id="AC024257">
    <property type="status" value="NOT_ANNOTATED_CDS"/>
    <property type="molecule type" value="Genomic_DNA"/>
</dbReference>
<dbReference type="EMBL" id="CH471111">
    <property type="protein sequence ID" value="EAW57982.1"/>
    <property type="molecule type" value="Genomic_DNA"/>
</dbReference>
<dbReference type="EMBL" id="BC018090">
    <property type="protein sequence ID" value="AAH18090.2"/>
    <property type="molecule type" value="mRNA"/>
</dbReference>
<dbReference type="EMBL" id="AL713659">
    <property type="protein sequence ID" value="CAD28468.1"/>
    <property type="molecule type" value="mRNA"/>
</dbReference>
<dbReference type="CCDS" id="CCDS53787.1">
    <molecule id="Q96N77-3"/>
</dbReference>
<dbReference type="CCDS" id="CCDS53788.1">
    <molecule id="Q96N77-4"/>
</dbReference>
<dbReference type="CCDS" id="CCDS8763.1">
    <molecule id="Q96N77-1"/>
</dbReference>
<dbReference type="RefSeq" id="NP_001166152.1">
    <molecule id="Q96N77-4"/>
    <property type="nucleotide sequence ID" value="NM_001172681.2"/>
</dbReference>
<dbReference type="RefSeq" id="NP_001166153.1">
    <molecule id="Q96N77-3"/>
    <property type="nucleotide sequence ID" value="NM_001172682.2"/>
</dbReference>
<dbReference type="RefSeq" id="NP_001352732.1">
    <molecule id="Q96N77-3"/>
    <property type="nucleotide sequence ID" value="NM_001365803.1"/>
</dbReference>
<dbReference type="RefSeq" id="NP_689533.2">
    <molecule id="Q96N77-1"/>
    <property type="nucleotide sequence ID" value="NM_152320.3"/>
</dbReference>
<dbReference type="RefSeq" id="XP_005268695.1">
    <molecule id="Q96N77-4"/>
    <property type="nucleotide sequence ID" value="XM_005268638.5"/>
</dbReference>
<dbReference type="RefSeq" id="XP_011536199.1">
    <property type="nucleotide sequence ID" value="XM_011537897.1"/>
</dbReference>
<dbReference type="RefSeq" id="XP_011536200.1">
    <molecule id="Q96N77-4"/>
    <property type="nucleotide sequence ID" value="XM_011537898.3"/>
</dbReference>
<dbReference type="RefSeq" id="XP_016874286.1">
    <property type="nucleotide sequence ID" value="XM_017018797.1"/>
</dbReference>
<dbReference type="RefSeq" id="XP_054227048.1">
    <molecule id="Q96N77-4"/>
    <property type="nucleotide sequence ID" value="XM_054371073.1"/>
</dbReference>
<dbReference type="RefSeq" id="XP_054227049.1">
    <molecule id="Q96N77-4"/>
    <property type="nucleotide sequence ID" value="XM_054371074.1"/>
</dbReference>
<dbReference type="SMR" id="Q96N77"/>
<dbReference type="BioGRID" id="125718">
    <property type="interactions" value="21"/>
</dbReference>
<dbReference type="FunCoup" id="Q96N77">
    <property type="interactions" value="563"/>
</dbReference>
<dbReference type="IntAct" id="Q96N77">
    <property type="interactions" value="30"/>
</dbReference>
<dbReference type="MINT" id="Q96N77"/>
<dbReference type="STRING" id="9606.ENSP00000437832"/>
<dbReference type="GlyGen" id="Q96N77">
    <property type="glycosylation" value="1 site, 1 O-linked glycan (1 site)"/>
</dbReference>
<dbReference type="iPTMnet" id="Q96N77"/>
<dbReference type="PhosphoSitePlus" id="Q96N77"/>
<dbReference type="BioMuta" id="ZNF641"/>
<dbReference type="DMDM" id="146328571"/>
<dbReference type="jPOST" id="Q96N77"/>
<dbReference type="MassIVE" id="Q96N77"/>
<dbReference type="PaxDb" id="9606-ENSP00000437832"/>
<dbReference type="PeptideAtlas" id="Q96N77"/>
<dbReference type="ProteomicsDB" id="3621"/>
<dbReference type="ProteomicsDB" id="77481">
    <molecule id="Q96N77-1"/>
</dbReference>
<dbReference type="ProteomicsDB" id="77482">
    <molecule id="Q96N77-2"/>
</dbReference>
<dbReference type="ProteomicsDB" id="77483">
    <molecule id="Q96N77-3"/>
</dbReference>
<dbReference type="Antibodypedia" id="25642">
    <property type="antibodies" value="59 antibodies from 12 providers"/>
</dbReference>
<dbReference type="DNASU" id="121274"/>
<dbReference type="Ensembl" id="ENST00000301042.7">
    <molecule id="Q96N77-1"/>
    <property type="protein sequence ID" value="ENSP00000301042.3"/>
    <property type="gene ID" value="ENSG00000167528.13"/>
</dbReference>
<dbReference type="Ensembl" id="ENST00000448928.7">
    <molecule id="Q96N77-3"/>
    <property type="protein sequence ID" value="ENSP00000394627.3"/>
    <property type="gene ID" value="ENSG00000167528.13"/>
</dbReference>
<dbReference type="Ensembl" id="ENST00000544117.6">
    <molecule id="Q96N77-1"/>
    <property type="protein sequence ID" value="ENSP00000437832.2"/>
    <property type="gene ID" value="ENSG00000167528.13"/>
</dbReference>
<dbReference type="Ensembl" id="ENST00000547026.6">
    <molecule id="Q96N77-4"/>
    <property type="protein sequence ID" value="ENSP00000449974.1"/>
    <property type="gene ID" value="ENSG00000167528.13"/>
</dbReference>
<dbReference type="GeneID" id="121274"/>
<dbReference type="KEGG" id="hsa:121274"/>
<dbReference type="MANE-Select" id="ENST00000547026.6">
    <molecule id="Q96N77-4"/>
    <property type="protein sequence ID" value="ENSP00000449974.1"/>
    <property type="RefSeq nucleotide sequence ID" value="NM_001172681.2"/>
    <property type="RefSeq protein sequence ID" value="NP_001166152.1"/>
</dbReference>
<dbReference type="UCSC" id="uc001rrn.3">
    <molecule id="Q96N77-1"/>
    <property type="organism name" value="human"/>
</dbReference>
<dbReference type="AGR" id="HGNC:31834"/>
<dbReference type="CTD" id="121274"/>
<dbReference type="DisGeNET" id="121274"/>
<dbReference type="GeneCards" id="ZNF641"/>
<dbReference type="HGNC" id="HGNC:31834">
    <property type="gene designation" value="ZNF641"/>
</dbReference>
<dbReference type="HPA" id="ENSG00000167528">
    <property type="expression patterns" value="Low tissue specificity"/>
</dbReference>
<dbReference type="MIM" id="613906">
    <property type="type" value="gene"/>
</dbReference>
<dbReference type="neXtProt" id="NX_Q96N77"/>
<dbReference type="OpenTargets" id="ENSG00000167528"/>
<dbReference type="PharmGKB" id="PA142670508"/>
<dbReference type="VEuPathDB" id="HostDB:ENSG00000167528"/>
<dbReference type="eggNOG" id="KOG1721">
    <property type="taxonomic scope" value="Eukaryota"/>
</dbReference>
<dbReference type="GeneTree" id="ENSGT00940000162121"/>
<dbReference type="HOGENOM" id="CLU_002678_0_7_1"/>
<dbReference type="InParanoid" id="Q96N77"/>
<dbReference type="OMA" id="WESMNIQ"/>
<dbReference type="OrthoDB" id="6077919at2759"/>
<dbReference type="PAN-GO" id="Q96N77">
    <property type="GO annotations" value="5 GO annotations based on evolutionary models"/>
</dbReference>
<dbReference type="PhylomeDB" id="Q96N77"/>
<dbReference type="TreeFam" id="TF350829"/>
<dbReference type="PathwayCommons" id="Q96N77"/>
<dbReference type="Reactome" id="R-HSA-212436">
    <property type="pathway name" value="Generic Transcription Pathway"/>
</dbReference>
<dbReference type="SignaLink" id="Q96N77"/>
<dbReference type="BioGRID-ORCS" id="121274">
    <property type="hits" value="13 hits in 1176 CRISPR screens"/>
</dbReference>
<dbReference type="ChiTaRS" id="ZNF641">
    <property type="organism name" value="human"/>
</dbReference>
<dbReference type="GenomeRNAi" id="121274"/>
<dbReference type="Pharos" id="Q96N77">
    <property type="development level" value="Tdark"/>
</dbReference>
<dbReference type="PRO" id="PR:Q96N77"/>
<dbReference type="Proteomes" id="UP000005640">
    <property type="component" value="Chromosome 12"/>
</dbReference>
<dbReference type="RNAct" id="Q96N77">
    <property type="molecule type" value="protein"/>
</dbReference>
<dbReference type="Bgee" id="ENSG00000167528">
    <property type="expression patterns" value="Expressed in germinal epithelium of ovary and 189 other cell types or tissues"/>
</dbReference>
<dbReference type="ExpressionAtlas" id="Q96N77">
    <property type="expression patterns" value="baseline and differential"/>
</dbReference>
<dbReference type="GO" id="GO:0005829">
    <property type="term" value="C:cytosol"/>
    <property type="evidence" value="ECO:0000314"/>
    <property type="project" value="HPA"/>
</dbReference>
<dbReference type="GO" id="GO:0005730">
    <property type="term" value="C:nucleolus"/>
    <property type="evidence" value="ECO:0000314"/>
    <property type="project" value="HPA"/>
</dbReference>
<dbReference type="GO" id="GO:0005654">
    <property type="term" value="C:nucleoplasm"/>
    <property type="evidence" value="ECO:0000314"/>
    <property type="project" value="HPA"/>
</dbReference>
<dbReference type="GO" id="GO:0005634">
    <property type="term" value="C:nucleus"/>
    <property type="evidence" value="ECO:0000318"/>
    <property type="project" value="GO_Central"/>
</dbReference>
<dbReference type="GO" id="GO:0000981">
    <property type="term" value="F:DNA-binding transcription factor activity, RNA polymerase II-specific"/>
    <property type="evidence" value="ECO:0000318"/>
    <property type="project" value="GO_Central"/>
</dbReference>
<dbReference type="GO" id="GO:0000977">
    <property type="term" value="F:RNA polymerase II transcription regulatory region sequence-specific DNA binding"/>
    <property type="evidence" value="ECO:0000318"/>
    <property type="project" value="GO_Central"/>
</dbReference>
<dbReference type="GO" id="GO:0008270">
    <property type="term" value="F:zinc ion binding"/>
    <property type="evidence" value="ECO:0007669"/>
    <property type="project" value="UniProtKB-KW"/>
</dbReference>
<dbReference type="GO" id="GO:0006357">
    <property type="term" value="P:regulation of transcription by RNA polymerase II"/>
    <property type="evidence" value="ECO:0000318"/>
    <property type="project" value="GO_Central"/>
</dbReference>
<dbReference type="CDD" id="cd07765">
    <property type="entry name" value="KRAB_A-box"/>
    <property type="match status" value="1"/>
</dbReference>
<dbReference type="FunFam" id="3.30.160.60:FF:000770">
    <property type="entry name" value="zinc finger protein 16"/>
    <property type="match status" value="1"/>
</dbReference>
<dbReference type="FunFam" id="3.30.160.60:FF:000893">
    <property type="entry name" value="Zinc finger protein 641"/>
    <property type="match status" value="1"/>
</dbReference>
<dbReference type="FunFam" id="3.30.160.60:FF:000911">
    <property type="entry name" value="Zinc finger protein 641"/>
    <property type="match status" value="1"/>
</dbReference>
<dbReference type="FunFam" id="3.30.160.60:FF:000948">
    <property type="entry name" value="Zinc finger protein 641"/>
    <property type="match status" value="1"/>
</dbReference>
<dbReference type="FunFam" id="3.30.160.60:FF:001318">
    <property type="entry name" value="zinc finger protein 641"/>
    <property type="match status" value="1"/>
</dbReference>
<dbReference type="Gene3D" id="6.10.140.140">
    <property type="match status" value="1"/>
</dbReference>
<dbReference type="Gene3D" id="3.30.160.60">
    <property type="entry name" value="Classic Zinc Finger"/>
    <property type="match status" value="5"/>
</dbReference>
<dbReference type="InterPro" id="IPR001909">
    <property type="entry name" value="KRAB"/>
</dbReference>
<dbReference type="InterPro" id="IPR036051">
    <property type="entry name" value="KRAB_dom_sf"/>
</dbReference>
<dbReference type="InterPro" id="IPR036236">
    <property type="entry name" value="Znf_C2H2_sf"/>
</dbReference>
<dbReference type="InterPro" id="IPR013087">
    <property type="entry name" value="Znf_C2H2_type"/>
</dbReference>
<dbReference type="PANTHER" id="PTHR24381">
    <property type="entry name" value="ZINC FINGER PROTEIN"/>
    <property type="match status" value="1"/>
</dbReference>
<dbReference type="PANTHER" id="PTHR24381:SF409">
    <property type="entry name" value="ZINC FINGER PROTEIN 641"/>
    <property type="match status" value="1"/>
</dbReference>
<dbReference type="Pfam" id="PF01352">
    <property type="entry name" value="KRAB"/>
    <property type="match status" value="1"/>
</dbReference>
<dbReference type="Pfam" id="PF00096">
    <property type="entry name" value="zf-C2H2"/>
    <property type="match status" value="5"/>
</dbReference>
<dbReference type="SMART" id="SM00349">
    <property type="entry name" value="KRAB"/>
    <property type="match status" value="1"/>
</dbReference>
<dbReference type="SMART" id="SM00355">
    <property type="entry name" value="ZnF_C2H2"/>
    <property type="match status" value="5"/>
</dbReference>
<dbReference type="SUPFAM" id="SSF57667">
    <property type="entry name" value="beta-beta-alpha zinc fingers"/>
    <property type="match status" value="3"/>
</dbReference>
<dbReference type="SUPFAM" id="SSF109640">
    <property type="entry name" value="KRAB domain (Kruppel-associated box)"/>
    <property type="match status" value="1"/>
</dbReference>
<dbReference type="PROSITE" id="PS50805">
    <property type="entry name" value="KRAB"/>
    <property type="match status" value="1"/>
</dbReference>
<dbReference type="PROSITE" id="PS00028">
    <property type="entry name" value="ZINC_FINGER_C2H2_1"/>
    <property type="match status" value="5"/>
</dbReference>
<dbReference type="PROSITE" id="PS50157">
    <property type="entry name" value="ZINC_FINGER_C2H2_2"/>
    <property type="match status" value="5"/>
</dbReference>
<feature type="chain" id="PRO_0000285301" description="Zinc finger protein 641">
    <location>
        <begin position="1"/>
        <end position="438"/>
    </location>
</feature>
<feature type="domain" description="KRAB" evidence="2">
    <location>
        <begin position="109"/>
        <end position="181"/>
    </location>
</feature>
<feature type="zinc finger region" description="C2H2-type 1" evidence="1">
    <location>
        <begin position="264"/>
        <end position="286"/>
    </location>
</feature>
<feature type="zinc finger region" description="C2H2-type 2" evidence="1">
    <location>
        <begin position="292"/>
        <end position="314"/>
    </location>
</feature>
<feature type="zinc finger region" description="C2H2-type 3" evidence="1">
    <location>
        <begin position="320"/>
        <end position="342"/>
    </location>
</feature>
<feature type="zinc finger region" description="C2H2-type 4" evidence="1">
    <location>
        <begin position="372"/>
        <end position="394"/>
    </location>
</feature>
<feature type="zinc finger region" description="C2H2-type 5" evidence="1">
    <location>
        <begin position="400"/>
        <end position="422"/>
    </location>
</feature>
<feature type="region of interest" description="Disordered" evidence="3">
    <location>
        <begin position="1"/>
        <end position="53"/>
    </location>
</feature>
<feature type="region of interest" description="Transactivation">
    <location>
        <begin position="171"/>
        <end position="265"/>
    </location>
</feature>
<feature type="region of interest" description="Disordered" evidence="3">
    <location>
        <begin position="345"/>
        <end position="367"/>
    </location>
</feature>
<feature type="region of interest" description="Disordered" evidence="3">
    <location>
        <begin position="418"/>
        <end position="438"/>
    </location>
</feature>
<feature type="compositionally biased region" description="Polar residues" evidence="3">
    <location>
        <begin position="17"/>
        <end position="32"/>
    </location>
</feature>
<feature type="compositionally biased region" description="Basic and acidic residues" evidence="3">
    <location>
        <begin position="40"/>
        <end position="51"/>
    </location>
</feature>
<feature type="compositionally biased region" description="Polar residues" evidence="3">
    <location>
        <begin position="422"/>
        <end position="438"/>
    </location>
</feature>
<feature type="modified residue" description="Phosphoserine" evidence="11">
    <location>
        <position position="191"/>
    </location>
</feature>
<feature type="modified residue" description="Phosphoserine" evidence="10 11">
    <location>
        <position position="426"/>
    </location>
</feature>
<feature type="splice variant" id="VSP_024867" description="In isoform 2, isoform 3 and isoform 4." evidence="7 8">
    <location>
        <begin position="1"/>
        <end position="14"/>
    </location>
</feature>
<feature type="splice variant" id="VSP_043422" description="In isoform 3." evidence="7">
    <original>GLVTIKDVSLCFSQEEWRSLDPSQTDFYGEYVMQENCGIVVSLR</original>
    <variation>VSSASLGVSCGPITAAFVLLSHQPIDELAHMIING</variation>
    <location>
        <begin position="107"/>
        <end position="150"/>
    </location>
</feature>
<feature type="splice variant" id="VSP_024868" description="In isoform 2." evidence="8">
    <location>
        <begin position="398"/>
        <end position="438"/>
    </location>
</feature>
<feature type="sequence variant" id="VAR_032009" description="In dbSNP:rs17851618." evidence="4">
    <original>S</original>
    <variation>C</variation>
    <location>
        <position position="231"/>
    </location>
</feature>
<feature type="sequence variant" id="VAR_032010" description="In dbSNP:rs2732481." evidence="6">
    <original>Q</original>
    <variation>P</variation>
    <location>
        <position position="363"/>
    </location>
</feature>
<feature type="sequence conflict" description="In Ref. 5; AAH18090." evidence="9" ref="5">
    <original>G</original>
    <variation>R</variation>
    <location>
        <position position="26"/>
    </location>
</feature>
<feature type="sequence conflict" description="In Ref. 1; AAW28082 and 2; BAB71031." evidence="9" ref="1 2">
    <original>D</original>
    <variation>G</variation>
    <location>
        <position position="189"/>
    </location>
</feature>